<keyword id="KW-0131">Cell cycle</keyword>
<keyword id="KW-0132">Cell division</keyword>
<keyword id="KW-0143">Chaperone</keyword>
<keyword id="KW-0963">Cytoplasm</keyword>
<keyword id="KW-0413">Isomerase</keyword>
<keyword id="KW-0697">Rotamase</keyword>
<sequence>MQVSVETTQGLGRRVTITVAADSIEKAVKSELVKAAKNVRIDGFRKGHVPMNIVEQRYGASVRQDVLGDLMQRNFVDAIIKEKINPAGAPNYVPGEYKQGEDFTYSVEFEVYPEVELKDLESIEVEKPVVEVNDADVDTMLETLRKQQATWKETDAAATAEDRATLDFTGSIDGEEFEGGKATDFVLAMGQGRMIPGFEEGVIGHKAGEEFTIDVNFPEDYHAENLKGKSAKFAIVLKKVEVRELPELTEEFIKRFGVADGSLAGLRAEVRKNMERELKGAVRNRVKTQAIDGLVSANNIDVPTALVDGEIDVLRRQAAQRFGGNEKQAAELPRELFEEQAKRRVVVGLLLGEVISQHELKADEDRVKALIEEMASAYEDPQEVIEFYSKNKELMNNMRNVALEEQAVETLLAKAKVTEKPTTFSELMNQTTAA</sequence>
<gene>
    <name evidence="1" type="primary">tig</name>
    <name type="ordered locus">YPDSF_2794</name>
</gene>
<feature type="chain" id="PRO_1000022783" description="Trigger factor">
    <location>
        <begin position="1"/>
        <end position="434"/>
    </location>
</feature>
<feature type="domain" description="PPIase FKBP-type" evidence="1">
    <location>
        <begin position="161"/>
        <end position="246"/>
    </location>
</feature>
<accession>A4TPE4</accession>
<name>TIG_YERPP</name>
<protein>
    <recommendedName>
        <fullName evidence="1">Trigger factor</fullName>
        <shortName evidence="1">TF</shortName>
        <ecNumber evidence="1">5.2.1.8</ecNumber>
    </recommendedName>
    <alternativeName>
        <fullName evidence="1">PPIase</fullName>
    </alternativeName>
</protein>
<proteinExistence type="inferred from homology"/>
<reference key="1">
    <citation type="submission" date="2007-02" db="EMBL/GenBank/DDBJ databases">
        <title>Complete sequence of chromosome of Yersinia pestis Pestoides F.</title>
        <authorList>
            <consortium name="US DOE Joint Genome Institute"/>
            <person name="Copeland A."/>
            <person name="Lucas S."/>
            <person name="Lapidus A."/>
            <person name="Barry K."/>
            <person name="Detter J.C."/>
            <person name="Glavina del Rio T."/>
            <person name="Hammon N."/>
            <person name="Israni S."/>
            <person name="Dalin E."/>
            <person name="Tice H."/>
            <person name="Pitluck S."/>
            <person name="Di Bartolo G."/>
            <person name="Chain P."/>
            <person name="Malfatti S."/>
            <person name="Shin M."/>
            <person name="Vergez L."/>
            <person name="Schmutz J."/>
            <person name="Larimer F."/>
            <person name="Land M."/>
            <person name="Hauser L."/>
            <person name="Worsham P."/>
            <person name="Chu M."/>
            <person name="Bearden S."/>
            <person name="Garcia E."/>
            <person name="Richardson P."/>
        </authorList>
    </citation>
    <scope>NUCLEOTIDE SEQUENCE [LARGE SCALE GENOMIC DNA]</scope>
    <source>
        <strain>Pestoides F</strain>
    </source>
</reference>
<dbReference type="EC" id="5.2.1.8" evidence="1"/>
<dbReference type="EMBL" id="CP000668">
    <property type="protein sequence ID" value="ABP41156.1"/>
    <property type="molecule type" value="Genomic_DNA"/>
</dbReference>
<dbReference type="RefSeq" id="WP_002208643.1">
    <property type="nucleotide sequence ID" value="NZ_CP009715.1"/>
</dbReference>
<dbReference type="SMR" id="A4TPE4"/>
<dbReference type="GeneID" id="57975553"/>
<dbReference type="KEGG" id="ypp:YPDSF_2794"/>
<dbReference type="PATRIC" id="fig|386656.14.peg.51"/>
<dbReference type="GO" id="GO:0005737">
    <property type="term" value="C:cytoplasm"/>
    <property type="evidence" value="ECO:0007669"/>
    <property type="project" value="UniProtKB-SubCell"/>
</dbReference>
<dbReference type="GO" id="GO:0003755">
    <property type="term" value="F:peptidyl-prolyl cis-trans isomerase activity"/>
    <property type="evidence" value="ECO:0007669"/>
    <property type="project" value="UniProtKB-UniRule"/>
</dbReference>
<dbReference type="GO" id="GO:0044183">
    <property type="term" value="F:protein folding chaperone"/>
    <property type="evidence" value="ECO:0007669"/>
    <property type="project" value="TreeGrafter"/>
</dbReference>
<dbReference type="GO" id="GO:0043022">
    <property type="term" value="F:ribosome binding"/>
    <property type="evidence" value="ECO:0007669"/>
    <property type="project" value="TreeGrafter"/>
</dbReference>
<dbReference type="GO" id="GO:0051083">
    <property type="term" value="P:'de novo' cotranslational protein folding"/>
    <property type="evidence" value="ECO:0007669"/>
    <property type="project" value="TreeGrafter"/>
</dbReference>
<dbReference type="GO" id="GO:0051301">
    <property type="term" value="P:cell division"/>
    <property type="evidence" value="ECO:0007669"/>
    <property type="project" value="UniProtKB-KW"/>
</dbReference>
<dbReference type="GO" id="GO:0061077">
    <property type="term" value="P:chaperone-mediated protein folding"/>
    <property type="evidence" value="ECO:0007669"/>
    <property type="project" value="TreeGrafter"/>
</dbReference>
<dbReference type="GO" id="GO:0015031">
    <property type="term" value="P:protein transport"/>
    <property type="evidence" value="ECO:0007669"/>
    <property type="project" value="UniProtKB-UniRule"/>
</dbReference>
<dbReference type="GO" id="GO:0043335">
    <property type="term" value="P:protein unfolding"/>
    <property type="evidence" value="ECO:0007669"/>
    <property type="project" value="TreeGrafter"/>
</dbReference>
<dbReference type="FunFam" id="1.10.3120.10:FF:000001">
    <property type="entry name" value="Trigger factor"/>
    <property type="match status" value="1"/>
</dbReference>
<dbReference type="FunFam" id="3.10.50.40:FF:000001">
    <property type="entry name" value="Trigger factor"/>
    <property type="match status" value="1"/>
</dbReference>
<dbReference type="FunFam" id="3.30.70.1050:FF:000001">
    <property type="entry name" value="Trigger factor"/>
    <property type="match status" value="1"/>
</dbReference>
<dbReference type="Gene3D" id="3.10.50.40">
    <property type="match status" value="1"/>
</dbReference>
<dbReference type="Gene3D" id="3.30.70.1050">
    <property type="entry name" value="Trigger factor ribosome-binding domain"/>
    <property type="match status" value="1"/>
</dbReference>
<dbReference type="Gene3D" id="1.10.3120.10">
    <property type="entry name" value="Trigger factor, C-terminal domain"/>
    <property type="match status" value="1"/>
</dbReference>
<dbReference type="HAMAP" id="MF_00303">
    <property type="entry name" value="Trigger_factor_Tig"/>
    <property type="match status" value="1"/>
</dbReference>
<dbReference type="InterPro" id="IPR046357">
    <property type="entry name" value="PPIase_dom_sf"/>
</dbReference>
<dbReference type="InterPro" id="IPR001179">
    <property type="entry name" value="PPIase_FKBP_dom"/>
</dbReference>
<dbReference type="InterPro" id="IPR005215">
    <property type="entry name" value="Trig_fac"/>
</dbReference>
<dbReference type="InterPro" id="IPR008880">
    <property type="entry name" value="Trigger_fac_C"/>
</dbReference>
<dbReference type="InterPro" id="IPR037041">
    <property type="entry name" value="Trigger_fac_C_sf"/>
</dbReference>
<dbReference type="InterPro" id="IPR008881">
    <property type="entry name" value="Trigger_fac_ribosome-bd_bac"/>
</dbReference>
<dbReference type="InterPro" id="IPR036611">
    <property type="entry name" value="Trigger_fac_ribosome-bd_sf"/>
</dbReference>
<dbReference type="InterPro" id="IPR027304">
    <property type="entry name" value="Trigger_fact/SurA_dom_sf"/>
</dbReference>
<dbReference type="NCBIfam" id="TIGR00115">
    <property type="entry name" value="tig"/>
    <property type="match status" value="1"/>
</dbReference>
<dbReference type="PANTHER" id="PTHR30560">
    <property type="entry name" value="TRIGGER FACTOR CHAPERONE AND PEPTIDYL-PROLYL CIS/TRANS ISOMERASE"/>
    <property type="match status" value="1"/>
</dbReference>
<dbReference type="PANTHER" id="PTHR30560:SF3">
    <property type="entry name" value="TRIGGER FACTOR-LIKE PROTEIN TIG, CHLOROPLASTIC"/>
    <property type="match status" value="1"/>
</dbReference>
<dbReference type="Pfam" id="PF00254">
    <property type="entry name" value="FKBP_C"/>
    <property type="match status" value="1"/>
</dbReference>
<dbReference type="Pfam" id="PF05698">
    <property type="entry name" value="Trigger_C"/>
    <property type="match status" value="1"/>
</dbReference>
<dbReference type="Pfam" id="PF05697">
    <property type="entry name" value="Trigger_N"/>
    <property type="match status" value="1"/>
</dbReference>
<dbReference type="PIRSF" id="PIRSF003095">
    <property type="entry name" value="Trigger_factor"/>
    <property type="match status" value="1"/>
</dbReference>
<dbReference type="SUPFAM" id="SSF54534">
    <property type="entry name" value="FKBP-like"/>
    <property type="match status" value="1"/>
</dbReference>
<dbReference type="SUPFAM" id="SSF109998">
    <property type="entry name" value="Triger factor/SurA peptide-binding domain-like"/>
    <property type="match status" value="1"/>
</dbReference>
<dbReference type="SUPFAM" id="SSF102735">
    <property type="entry name" value="Trigger factor ribosome-binding domain"/>
    <property type="match status" value="1"/>
</dbReference>
<dbReference type="PROSITE" id="PS50059">
    <property type="entry name" value="FKBP_PPIASE"/>
    <property type="match status" value="1"/>
</dbReference>
<organism>
    <name type="scientific">Yersinia pestis (strain Pestoides F)</name>
    <dbReference type="NCBI Taxonomy" id="386656"/>
    <lineage>
        <taxon>Bacteria</taxon>
        <taxon>Pseudomonadati</taxon>
        <taxon>Pseudomonadota</taxon>
        <taxon>Gammaproteobacteria</taxon>
        <taxon>Enterobacterales</taxon>
        <taxon>Yersiniaceae</taxon>
        <taxon>Yersinia</taxon>
    </lineage>
</organism>
<comment type="function">
    <text evidence="1">Involved in protein export. Acts as a chaperone by maintaining the newly synthesized protein in an open conformation. Functions as a peptidyl-prolyl cis-trans isomerase.</text>
</comment>
<comment type="catalytic activity">
    <reaction evidence="1">
        <text>[protein]-peptidylproline (omega=180) = [protein]-peptidylproline (omega=0)</text>
        <dbReference type="Rhea" id="RHEA:16237"/>
        <dbReference type="Rhea" id="RHEA-COMP:10747"/>
        <dbReference type="Rhea" id="RHEA-COMP:10748"/>
        <dbReference type="ChEBI" id="CHEBI:83833"/>
        <dbReference type="ChEBI" id="CHEBI:83834"/>
        <dbReference type="EC" id="5.2.1.8"/>
    </reaction>
</comment>
<comment type="subcellular location">
    <subcellularLocation>
        <location>Cytoplasm</location>
    </subcellularLocation>
    <text evidence="1">About half TF is bound to the ribosome near the polypeptide exit tunnel while the other half is free in the cytoplasm.</text>
</comment>
<comment type="domain">
    <text evidence="1">Consists of 3 domains; the N-terminus binds the ribosome, the middle domain has PPIase activity, while the C-terminus has intrinsic chaperone activity on its own.</text>
</comment>
<comment type="similarity">
    <text evidence="1">Belongs to the FKBP-type PPIase family. Tig subfamily.</text>
</comment>
<evidence type="ECO:0000255" key="1">
    <source>
        <dbReference type="HAMAP-Rule" id="MF_00303"/>
    </source>
</evidence>